<evidence type="ECO:0000255" key="1">
    <source>
        <dbReference type="HAMAP-Rule" id="MF_01551"/>
    </source>
</evidence>
<accession>Q884S1</accession>
<comment type="function">
    <text evidence="1">Catalyzes the 2'-O-methylation at nucleotide C2498 in 23S rRNA.</text>
</comment>
<comment type="catalytic activity">
    <reaction evidence="1">
        <text>cytidine(2498) in 23S rRNA + S-adenosyl-L-methionine = 2'-O-methylcytidine(2498) in 23S rRNA + S-adenosyl-L-homocysteine + H(+)</text>
        <dbReference type="Rhea" id="RHEA:42788"/>
        <dbReference type="Rhea" id="RHEA-COMP:10244"/>
        <dbReference type="Rhea" id="RHEA-COMP:10245"/>
        <dbReference type="ChEBI" id="CHEBI:15378"/>
        <dbReference type="ChEBI" id="CHEBI:57856"/>
        <dbReference type="ChEBI" id="CHEBI:59789"/>
        <dbReference type="ChEBI" id="CHEBI:74495"/>
        <dbReference type="ChEBI" id="CHEBI:82748"/>
        <dbReference type="EC" id="2.1.1.186"/>
    </reaction>
</comment>
<comment type="subunit">
    <text evidence="1">Monomer.</text>
</comment>
<comment type="subcellular location">
    <subcellularLocation>
        <location evidence="1">Cytoplasm</location>
    </subcellularLocation>
</comment>
<comment type="similarity">
    <text evidence="1">Belongs to the class I-like SAM-binding methyltransferase superfamily. RNA methyltransferase RlmE family. RlmM subfamily.</text>
</comment>
<keyword id="KW-0963">Cytoplasm</keyword>
<keyword id="KW-0489">Methyltransferase</keyword>
<keyword id="KW-1185">Reference proteome</keyword>
<keyword id="KW-0698">rRNA processing</keyword>
<keyword id="KW-0949">S-adenosyl-L-methionine</keyword>
<keyword id="KW-0808">Transferase</keyword>
<reference key="1">
    <citation type="journal article" date="2003" name="Proc. Natl. Acad. Sci. U.S.A.">
        <title>The complete genome sequence of the Arabidopsis and tomato pathogen Pseudomonas syringae pv. tomato DC3000.</title>
        <authorList>
            <person name="Buell C.R."/>
            <person name="Joardar V."/>
            <person name="Lindeberg M."/>
            <person name="Selengut J."/>
            <person name="Paulsen I.T."/>
            <person name="Gwinn M.L."/>
            <person name="Dodson R.J."/>
            <person name="DeBoy R.T."/>
            <person name="Durkin A.S."/>
            <person name="Kolonay J.F."/>
            <person name="Madupu R."/>
            <person name="Daugherty S.C."/>
            <person name="Brinkac L.M."/>
            <person name="Beanan M.J."/>
            <person name="Haft D.H."/>
            <person name="Nelson W.C."/>
            <person name="Davidsen T.M."/>
            <person name="Zafar N."/>
            <person name="Zhou L."/>
            <person name="Liu J."/>
            <person name="Yuan Q."/>
            <person name="Khouri H.M."/>
            <person name="Fedorova N.B."/>
            <person name="Tran B."/>
            <person name="Russell D."/>
            <person name="Berry K.J."/>
            <person name="Utterback T.R."/>
            <person name="Van Aken S.E."/>
            <person name="Feldblyum T.V."/>
            <person name="D'Ascenzo M."/>
            <person name="Deng W.-L."/>
            <person name="Ramos A.R."/>
            <person name="Alfano J.R."/>
            <person name="Cartinhour S."/>
            <person name="Chatterjee A.K."/>
            <person name="Delaney T.P."/>
            <person name="Lazarowitz S.G."/>
            <person name="Martin G.B."/>
            <person name="Schneider D.J."/>
            <person name="Tang X."/>
            <person name="Bender C.L."/>
            <person name="White O."/>
            <person name="Fraser C.M."/>
            <person name="Collmer A."/>
        </authorList>
    </citation>
    <scope>NUCLEOTIDE SEQUENCE [LARGE SCALE GENOMIC DNA]</scope>
    <source>
        <strain>ATCC BAA-871 / DC3000</strain>
    </source>
</reference>
<gene>
    <name evidence="1" type="primary">rlmM</name>
    <name type="ordered locus">PSPTO_2017</name>
</gene>
<organism>
    <name type="scientific">Pseudomonas syringae pv. tomato (strain ATCC BAA-871 / DC3000)</name>
    <dbReference type="NCBI Taxonomy" id="223283"/>
    <lineage>
        <taxon>Bacteria</taxon>
        <taxon>Pseudomonadati</taxon>
        <taxon>Pseudomonadota</taxon>
        <taxon>Gammaproteobacteria</taxon>
        <taxon>Pseudomonadales</taxon>
        <taxon>Pseudomonadaceae</taxon>
        <taxon>Pseudomonas</taxon>
    </lineage>
</organism>
<protein>
    <recommendedName>
        <fullName evidence="1">Ribosomal RNA large subunit methyltransferase M</fullName>
        <ecNumber evidence="1">2.1.1.186</ecNumber>
    </recommendedName>
    <alternativeName>
        <fullName evidence="1">23S rRNA (cytidine2498-2'-O)-methyltransferase</fullName>
    </alternativeName>
    <alternativeName>
        <fullName evidence="1">23S rRNA 2'-O-ribose methyltransferase RlmM</fullName>
    </alternativeName>
</protein>
<name>RLMM_PSESM</name>
<proteinExistence type="inferred from homology"/>
<feature type="chain" id="PRO_0000070421" description="Ribosomal RNA large subunit methyltransferase M">
    <location>
        <begin position="1"/>
        <end position="357"/>
    </location>
</feature>
<feature type="active site" description="Proton acceptor" evidence="1">
    <location>
        <position position="300"/>
    </location>
</feature>
<feature type="binding site" evidence="1">
    <location>
        <position position="183"/>
    </location>
    <ligand>
        <name>S-adenosyl-L-methionine</name>
        <dbReference type="ChEBI" id="CHEBI:59789"/>
    </ligand>
</feature>
<feature type="binding site" evidence="1">
    <location>
        <begin position="216"/>
        <end position="219"/>
    </location>
    <ligand>
        <name>S-adenosyl-L-methionine</name>
        <dbReference type="ChEBI" id="CHEBI:59789"/>
    </ligand>
</feature>
<feature type="binding site" evidence="1">
    <location>
        <position position="235"/>
    </location>
    <ligand>
        <name>S-adenosyl-L-methionine</name>
        <dbReference type="ChEBI" id="CHEBI:59789"/>
    </ligand>
</feature>
<feature type="binding site" evidence="1">
    <location>
        <position position="255"/>
    </location>
    <ligand>
        <name>S-adenosyl-L-methionine</name>
        <dbReference type="ChEBI" id="CHEBI:59789"/>
    </ligand>
</feature>
<feature type="binding site" evidence="1">
    <location>
        <position position="271"/>
    </location>
    <ligand>
        <name>S-adenosyl-L-methionine</name>
        <dbReference type="ChEBI" id="CHEBI:59789"/>
    </ligand>
</feature>
<dbReference type="EC" id="2.1.1.186" evidence="1"/>
<dbReference type="EMBL" id="AE016853">
    <property type="protein sequence ID" value="AAO55535.1"/>
    <property type="molecule type" value="Genomic_DNA"/>
</dbReference>
<dbReference type="RefSeq" id="NP_791840.1">
    <property type="nucleotide sequence ID" value="NC_004578.1"/>
</dbReference>
<dbReference type="RefSeq" id="WP_011103806.1">
    <property type="nucleotide sequence ID" value="NC_004578.1"/>
</dbReference>
<dbReference type="SMR" id="Q884S1"/>
<dbReference type="STRING" id="223283.PSPTO_2017"/>
<dbReference type="GeneID" id="1183662"/>
<dbReference type="KEGG" id="pst:PSPTO_2017"/>
<dbReference type="PATRIC" id="fig|223283.9.peg.2048"/>
<dbReference type="eggNOG" id="COG2933">
    <property type="taxonomic scope" value="Bacteria"/>
</dbReference>
<dbReference type="HOGENOM" id="CLU_043780_0_0_6"/>
<dbReference type="OrthoDB" id="154490at2"/>
<dbReference type="PhylomeDB" id="Q884S1"/>
<dbReference type="Proteomes" id="UP000002515">
    <property type="component" value="Chromosome"/>
</dbReference>
<dbReference type="GO" id="GO:0005737">
    <property type="term" value="C:cytoplasm"/>
    <property type="evidence" value="ECO:0007669"/>
    <property type="project" value="UniProtKB-SubCell"/>
</dbReference>
<dbReference type="GO" id="GO:0008757">
    <property type="term" value="F:S-adenosylmethionine-dependent methyltransferase activity"/>
    <property type="evidence" value="ECO:0007669"/>
    <property type="project" value="UniProtKB-UniRule"/>
</dbReference>
<dbReference type="GO" id="GO:0032259">
    <property type="term" value="P:methylation"/>
    <property type="evidence" value="ECO:0007669"/>
    <property type="project" value="UniProtKB-KW"/>
</dbReference>
<dbReference type="GO" id="GO:0006364">
    <property type="term" value="P:rRNA processing"/>
    <property type="evidence" value="ECO:0007669"/>
    <property type="project" value="UniProtKB-UniRule"/>
</dbReference>
<dbReference type="Gene3D" id="3.30.2300.20">
    <property type="match status" value="1"/>
</dbReference>
<dbReference type="Gene3D" id="3.30.70.2810">
    <property type="match status" value="1"/>
</dbReference>
<dbReference type="Gene3D" id="3.40.50.150">
    <property type="entry name" value="Vaccinia Virus protein VP39"/>
    <property type="match status" value="1"/>
</dbReference>
<dbReference type="HAMAP" id="MF_01551">
    <property type="entry name" value="23SrRNA_methyltr_M"/>
    <property type="match status" value="1"/>
</dbReference>
<dbReference type="InterPro" id="IPR040739">
    <property type="entry name" value="RlmM_FDX"/>
</dbReference>
<dbReference type="InterPro" id="IPR048646">
    <property type="entry name" value="RlmM_THUMP-like"/>
</dbReference>
<dbReference type="InterPro" id="IPR002877">
    <property type="entry name" value="RNA_MeTrfase_FtsJ_dom"/>
</dbReference>
<dbReference type="InterPro" id="IPR011224">
    <property type="entry name" value="rRNA_MeTrfase_M"/>
</dbReference>
<dbReference type="InterPro" id="IPR029063">
    <property type="entry name" value="SAM-dependent_MTases_sf"/>
</dbReference>
<dbReference type="NCBIfam" id="NF008734">
    <property type="entry name" value="PRK11760.1"/>
    <property type="match status" value="1"/>
</dbReference>
<dbReference type="PANTHER" id="PTHR37524">
    <property type="entry name" value="RIBOSOMAL RNA LARGE SUBUNIT METHYLTRANSFERASE M"/>
    <property type="match status" value="1"/>
</dbReference>
<dbReference type="PANTHER" id="PTHR37524:SF2">
    <property type="entry name" value="RIBOSOMAL RNA METHYLTRANSFERASE FTSJ DOMAIN-CONTAINING PROTEIN"/>
    <property type="match status" value="1"/>
</dbReference>
<dbReference type="Pfam" id="PF01728">
    <property type="entry name" value="FtsJ"/>
    <property type="match status" value="1"/>
</dbReference>
<dbReference type="Pfam" id="PF18125">
    <property type="entry name" value="RlmM_FDX"/>
    <property type="match status" value="1"/>
</dbReference>
<dbReference type="Pfam" id="PF21239">
    <property type="entry name" value="RLMM_N"/>
    <property type="match status" value="1"/>
</dbReference>
<dbReference type="PIRSF" id="PIRSF028774">
    <property type="entry name" value="UCP028774"/>
    <property type="match status" value="1"/>
</dbReference>
<dbReference type="SUPFAM" id="SSF53335">
    <property type="entry name" value="S-adenosyl-L-methionine-dependent methyltransferases"/>
    <property type="match status" value="1"/>
</dbReference>
<sequence>MNTLFMHCRPGFEGEVCSEIADLAARLDVSGYAKARPDTACAEFICTEADGAERLMNGQRFDTLIFPRQWARGLFLDLPETDRISVILAQLSTFPTCGSLWLEVVDTNDGKELSNFCKKFEAPLRKALTQAGKLVDDPRKPRLLLTFKSGREVFLGLAEADNSAMWPMGIPRLKFPREAPSRSTLKLEEAWHHFIPRDQWDERLSGDMTGVDLGAAPGGWTYQLVRRGMLVTAIDNGPMAESLMDTGLVQHLMADGFTYKPRHPVDWMVCDIVEKPARNAALLETWLGEGLCREAVVNLKLPMKQRYAEVRRLLDRIEEGFQARGVRVSIGCKQLYHDREEVTCHLRRLDVAKAARK</sequence>